<name>RSMA_HALSA</name>
<gene>
    <name evidence="1" type="primary">rsmA</name>
    <name evidence="1" type="synonym">ksgA</name>
    <name type="ordered locus">VNG_1165G</name>
</gene>
<protein>
    <recommendedName>
        <fullName evidence="1">Probable ribosomal RNA small subunit methyltransferase A</fullName>
        <ecNumber evidence="1">2.1.1.-</ecNumber>
    </recommendedName>
    <alternativeName>
        <fullName evidence="1">16S rRNA dimethyladenosine transferase</fullName>
    </alternativeName>
    <alternativeName>
        <fullName evidence="1">16S rRNA dimethylase</fullName>
    </alternativeName>
    <alternativeName>
        <fullName evidence="1">S-adenosylmethionine-6-N',N'-adenosyl(rRNA) dimethyltransferase</fullName>
    </alternativeName>
</protein>
<reference key="1">
    <citation type="journal article" date="2000" name="Proc. Natl. Acad. Sci. U.S.A.">
        <title>Genome sequence of Halobacterium species NRC-1.</title>
        <authorList>
            <person name="Ng W.V."/>
            <person name="Kennedy S.P."/>
            <person name="Mahairas G.G."/>
            <person name="Berquist B."/>
            <person name="Pan M."/>
            <person name="Shukla H.D."/>
            <person name="Lasky S.R."/>
            <person name="Baliga N.S."/>
            <person name="Thorsson V."/>
            <person name="Sbrogna J."/>
            <person name="Swartzell S."/>
            <person name="Weir D."/>
            <person name="Hall J."/>
            <person name="Dahl T.A."/>
            <person name="Welti R."/>
            <person name="Goo Y.A."/>
            <person name="Leithauser B."/>
            <person name="Keller K."/>
            <person name="Cruz R."/>
            <person name="Danson M.J."/>
            <person name="Hough D.W."/>
            <person name="Maddocks D.G."/>
            <person name="Jablonski P.E."/>
            <person name="Krebs M.P."/>
            <person name="Angevine C.M."/>
            <person name="Dale H."/>
            <person name="Isenbarger T.A."/>
            <person name="Peck R.F."/>
            <person name="Pohlschroder M."/>
            <person name="Spudich J.L."/>
            <person name="Jung K.-H."/>
            <person name="Alam M."/>
            <person name="Freitas T."/>
            <person name="Hou S."/>
            <person name="Daniels C.J."/>
            <person name="Dennis P.P."/>
            <person name="Omer A.D."/>
            <person name="Ebhardt H."/>
            <person name="Lowe T.M."/>
            <person name="Liang P."/>
            <person name="Riley M."/>
            <person name="Hood L."/>
            <person name="DasSarma S."/>
        </authorList>
    </citation>
    <scope>NUCLEOTIDE SEQUENCE [LARGE SCALE GENOMIC DNA]</scope>
    <source>
        <strain>ATCC 700922 / JCM 11081 / NRC-1</strain>
    </source>
</reference>
<accession>Q9HQH1</accession>
<evidence type="ECO:0000255" key="1">
    <source>
        <dbReference type="HAMAP-Rule" id="MF_00607"/>
    </source>
</evidence>
<dbReference type="EC" id="2.1.1.-" evidence="1"/>
<dbReference type="EMBL" id="AE004437">
    <property type="protein sequence ID" value="AAG19544.1"/>
    <property type="molecule type" value="Genomic_DNA"/>
</dbReference>
<dbReference type="PIR" id="D84272">
    <property type="entry name" value="D84272"/>
</dbReference>
<dbReference type="RefSeq" id="WP_010902839.1">
    <property type="nucleotide sequence ID" value="NC_002607.1"/>
</dbReference>
<dbReference type="SMR" id="Q9HQH1"/>
<dbReference type="FunCoup" id="Q9HQH1">
    <property type="interactions" value="78"/>
</dbReference>
<dbReference type="STRING" id="64091.VNG_1165G"/>
<dbReference type="PaxDb" id="64091-VNG_1165G"/>
<dbReference type="KEGG" id="hal:VNG_1165G"/>
<dbReference type="PATRIC" id="fig|64091.14.peg.891"/>
<dbReference type="HOGENOM" id="CLU_041220_0_2_2"/>
<dbReference type="InParanoid" id="Q9HQH1"/>
<dbReference type="OrthoDB" id="9883at2157"/>
<dbReference type="PhylomeDB" id="Q9HQH1"/>
<dbReference type="Proteomes" id="UP000000554">
    <property type="component" value="Chromosome"/>
</dbReference>
<dbReference type="GO" id="GO:0005737">
    <property type="term" value="C:cytoplasm"/>
    <property type="evidence" value="ECO:0007669"/>
    <property type="project" value="UniProtKB-SubCell"/>
</dbReference>
<dbReference type="GO" id="GO:0003723">
    <property type="term" value="F:RNA binding"/>
    <property type="evidence" value="ECO:0007669"/>
    <property type="project" value="UniProtKB-KW"/>
</dbReference>
<dbReference type="GO" id="GO:0000179">
    <property type="term" value="F:rRNA (adenine-N6,N6-)-dimethyltransferase activity"/>
    <property type="evidence" value="ECO:0000318"/>
    <property type="project" value="GO_Central"/>
</dbReference>
<dbReference type="GO" id="GO:0031167">
    <property type="term" value="P:rRNA methylation"/>
    <property type="evidence" value="ECO:0000318"/>
    <property type="project" value="GO_Central"/>
</dbReference>
<dbReference type="CDD" id="cd02440">
    <property type="entry name" value="AdoMet_MTases"/>
    <property type="match status" value="1"/>
</dbReference>
<dbReference type="Gene3D" id="1.10.8.100">
    <property type="entry name" value="Ribosomal RNA adenine dimethylase-like, domain 2"/>
    <property type="match status" value="1"/>
</dbReference>
<dbReference type="Gene3D" id="3.40.50.150">
    <property type="entry name" value="Vaccinia Virus protein VP39"/>
    <property type="match status" value="1"/>
</dbReference>
<dbReference type="HAMAP" id="MF_00607">
    <property type="entry name" value="16SrRNA_methyltr_A"/>
    <property type="match status" value="1"/>
</dbReference>
<dbReference type="InterPro" id="IPR001737">
    <property type="entry name" value="KsgA/Erm"/>
</dbReference>
<dbReference type="InterPro" id="IPR023165">
    <property type="entry name" value="rRNA_Ade_diMease-like_C"/>
</dbReference>
<dbReference type="InterPro" id="IPR020596">
    <property type="entry name" value="rRNA_Ade_Mease_Trfase_CS"/>
</dbReference>
<dbReference type="InterPro" id="IPR020598">
    <property type="entry name" value="rRNA_Ade_methylase_Trfase_N"/>
</dbReference>
<dbReference type="InterPro" id="IPR011530">
    <property type="entry name" value="rRNA_adenine_dimethylase"/>
</dbReference>
<dbReference type="InterPro" id="IPR029063">
    <property type="entry name" value="SAM-dependent_MTases_sf"/>
</dbReference>
<dbReference type="NCBIfam" id="TIGR00755">
    <property type="entry name" value="ksgA"/>
    <property type="match status" value="1"/>
</dbReference>
<dbReference type="NCBIfam" id="NF011486">
    <property type="entry name" value="PRK14896.1-1"/>
    <property type="match status" value="1"/>
</dbReference>
<dbReference type="PANTHER" id="PTHR11727">
    <property type="entry name" value="DIMETHYLADENOSINE TRANSFERASE"/>
    <property type="match status" value="1"/>
</dbReference>
<dbReference type="PANTHER" id="PTHR11727:SF7">
    <property type="entry name" value="DIMETHYLADENOSINE TRANSFERASE-RELATED"/>
    <property type="match status" value="1"/>
</dbReference>
<dbReference type="Pfam" id="PF00398">
    <property type="entry name" value="RrnaAD"/>
    <property type="match status" value="1"/>
</dbReference>
<dbReference type="SMART" id="SM00650">
    <property type="entry name" value="rADc"/>
    <property type="match status" value="1"/>
</dbReference>
<dbReference type="SUPFAM" id="SSF53335">
    <property type="entry name" value="S-adenosyl-L-methionine-dependent methyltransferases"/>
    <property type="match status" value="1"/>
</dbReference>
<dbReference type="PROSITE" id="PS01131">
    <property type="entry name" value="RRNA_A_DIMETH"/>
    <property type="match status" value="1"/>
</dbReference>
<dbReference type="PROSITE" id="PS51689">
    <property type="entry name" value="SAM_RNA_A_N6_MT"/>
    <property type="match status" value="1"/>
</dbReference>
<sequence length="282" mass="30275">MTAPRDPDALIRRAGRPNPDFDQHFLIDDRVLDRIPTYADGFDRGHVLEIGAGTGALTDRLLSVADRVTAVERDESYASFLREEFADAIAAGDLDVVAGDALAVDLPAFTCAVSNLPYGVASEVTFRLLPAGKPMVLMYQLEFAERMAADPGTSEYGRLSVATQHYADVSIVETVPAAAFDPQPRVESAVVRVTPRDPDYVVADEAFFLSFVKALFTQRRKTTRNAIRNTAHISGLDDPDAVVAAVDDDVLGTRPGSLSPATFAALANVAWGVETAPGPDPQ</sequence>
<organism>
    <name type="scientific">Halobacterium salinarum (strain ATCC 700922 / JCM 11081 / NRC-1)</name>
    <name type="common">Halobacterium halobium</name>
    <dbReference type="NCBI Taxonomy" id="64091"/>
    <lineage>
        <taxon>Archaea</taxon>
        <taxon>Methanobacteriati</taxon>
        <taxon>Methanobacteriota</taxon>
        <taxon>Stenosarchaea group</taxon>
        <taxon>Halobacteria</taxon>
        <taxon>Halobacteriales</taxon>
        <taxon>Halobacteriaceae</taxon>
        <taxon>Halobacterium</taxon>
        <taxon>Halobacterium salinarum NRC-34001</taxon>
    </lineage>
</organism>
<comment type="function">
    <text evidence="1">Specifically dimethylates two adjacent adenosines in the loop of a conserved hairpin near the 3'-end of 16S rRNA in the 30S particle. May play a critical role in biogenesis of 30S subunits.</text>
</comment>
<comment type="subcellular location">
    <subcellularLocation>
        <location evidence="1">Cytoplasm</location>
    </subcellularLocation>
</comment>
<comment type="similarity">
    <text evidence="1">Belongs to the class I-like SAM-binding methyltransferase superfamily. rRNA adenine N(6)-methyltransferase family. RsmA subfamily.</text>
</comment>
<keyword id="KW-0963">Cytoplasm</keyword>
<keyword id="KW-0489">Methyltransferase</keyword>
<keyword id="KW-1185">Reference proteome</keyword>
<keyword id="KW-0694">RNA-binding</keyword>
<keyword id="KW-0698">rRNA processing</keyword>
<keyword id="KW-0949">S-adenosyl-L-methionine</keyword>
<keyword id="KW-0808">Transferase</keyword>
<feature type="chain" id="PRO_0000101654" description="Probable ribosomal RNA small subunit methyltransferase A">
    <location>
        <begin position="1"/>
        <end position="282"/>
    </location>
</feature>
<feature type="binding site" evidence="1">
    <location>
        <position position="24"/>
    </location>
    <ligand>
        <name>S-adenosyl-L-methionine</name>
        <dbReference type="ChEBI" id="CHEBI:59789"/>
    </ligand>
</feature>
<feature type="binding site" evidence="1">
    <location>
        <position position="26"/>
    </location>
    <ligand>
        <name>S-adenosyl-L-methionine</name>
        <dbReference type="ChEBI" id="CHEBI:59789"/>
    </ligand>
</feature>
<feature type="binding site" evidence="1">
    <location>
        <position position="51"/>
    </location>
    <ligand>
        <name>S-adenosyl-L-methionine</name>
        <dbReference type="ChEBI" id="CHEBI:59789"/>
    </ligand>
</feature>
<feature type="binding site" evidence="1">
    <location>
        <position position="72"/>
    </location>
    <ligand>
        <name>S-adenosyl-L-methionine</name>
        <dbReference type="ChEBI" id="CHEBI:59789"/>
    </ligand>
</feature>
<feature type="binding site" evidence="1">
    <location>
        <position position="100"/>
    </location>
    <ligand>
        <name>S-adenosyl-L-methionine</name>
        <dbReference type="ChEBI" id="CHEBI:59789"/>
    </ligand>
</feature>
<feature type="binding site" evidence="1">
    <location>
        <position position="115"/>
    </location>
    <ligand>
        <name>S-adenosyl-L-methionine</name>
        <dbReference type="ChEBI" id="CHEBI:59789"/>
    </ligand>
</feature>
<proteinExistence type="inferred from homology"/>